<keyword id="KW-0007">Acetylation</keyword>
<keyword id="KW-0440">LIM domain</keyword>
<keyword id="KW-0479">Metal-binding</keyword>
<keyword id="KW-0488">Methylation</keyword>
<keyword id="KW-1185">Reference proteome</keyword>
<keyword id="KW-0862">Zinc</keyword>
<organism>
    <name type="scientific">Mus musculus</name>
    <name type="common">Mouse</name>
    <dbReference type="NCBI Taxonomy" id="10090"/>
    <lineage>
        <taxon>Eukaryota</taxon>
        <taxon>Metazoa</taxon>
        <taxon>Chordata</taxon>
        <taxon>Craniata</taxon>
        <taxon>Vertebrata</taxon>
        <taxon>Euteleostomi</taxon>
        <taxon>Mammalia</taxon>
        <taxon>Eutheria</taxon>
        <taxon>Euarchontoglires</taxon>
        <taxon>Glires</taxon>
        <taxon>Rodentia</taxon>
        <taxon>Myomorpha</taxon>
        <taxon>Muroidea</taxon>
        <taxon>Muridae</taxon>
        <taxon>Murinae</taxon>
        <taxon>Mus</taxon>
        <taxon>Mus</taxon>
    </lineage>
</organism>
<sequence>MPKCPKCDKEVYFAERVTSLGKDWHRPCLKCEKCGKTLTSGGHAEHEGKPYCNHPCYSAMFGPKGFGRGGAESHTFK</sequence>
<protein>
    <recommendedName>
        <fullName>Cysteine-rich protein 1</fullName>
        <shortName>CRP-1</shortName>
    </recommendedName>
    <alternativeName>
        <fullName>Cysteine-rich intestinal protein</fullName>
        <shortName>CRIP</shortName>
    </alternativeName>
</protein>
<dbReference type="EMBL" id="M13018">
    <property type="protein sequence ID" value="AAA37458.1"/>
    <property type="molecule type" value="mRNA"/>
</dbReference>
<dbReference type="EMBL" id="AF450245">
    <property type="protein sequence ID" value="AAM97585.1"/>
    <property type="molecule type" value="Genomic_DNA"/>
</dbReference>
<dbReference type="EMBL" id="AK003075">
    <property type="protein sequence ID" value="BAB22550.1"/>
    <property type="molecule type" value="mRNA"/>
</dbReference>
<dbReference type="EMBL" id="AK008269">
    <property type="protein sequence ID" value="BAB25566.1"/>
    <property type="molecule type" value="mRNA"/>
</dbReference>
<dbReference type="EMBL" id="AK012068">
    <property type="protein sequence ID" value="BAB28006.1"/>
    <property type="molecule type" value="mRNA"/>
</dbReference>
<dbReference type="EMBL" id="AK168305">
    <property type="protein sequence ID" value="BAE40246.1"/>
    <property type="molecule type" value="mRNA"/>
</dbReference>
<dbReference type="EMBL" id="BC031922">
    <property type="protein sequence ID" value="AAH31922.1"/>
    <property type="molecule type" value="mRNA"/>
</dbReference>
<dbReference type="CCDS" id="CCDS26205.1"/>
<dbReference type="RefSeq" id="NP_031789.1">
    <property type="nucleotide sequence ID" value="NM_007763.4"/>
</dbReference>
<dbReference type="SMR" id="P63254"/>
<dbReference type="BioGRID" id="198885">
    <property type="interactions" value="2"/>
</dbReference>
<dbReference type="FunCoup" id="P63254">
    <property type="interactions" value="521"/>
</dbReference>
<dbReference type="STRING" id="10090.ENSMUSP00000143680"/>
<dbReference type="iPTMnet" id="P63254"/>
<dbReference type="PhosphoSitePlus" id="P63254"/>
<dbReference type="CPTAC" id="non-CPTAC-3355"/>
<dbReference type="jPOST" id="P63254"/>
<dbReference type="PaxDb" id="10090-ENSMUSP00000006523"/>
<dbReference type="PeptideAtlas" id="P63254"/>
<dbReference type="ProteomicsDB" id="285332"/>
<dbReference type="DNASU" id="12925"/>
<dbReference type="Ensembl" id="ENSMUST00000006523.12">
    <property type="protein sequence ID" value="ENSMUSP00000006523.8"/>
    <property type="gene ID" value="ENSMUSG00000006360.12"/>
</dbReference>
<dbReference type="Ensembl" id="ENSMUST00000200553.2">
    <property type="protein sequence ID" value="ENSMUSP00000143680.2"/>
    <property type="gene ID" value="ENSMUSG00000006360.12"/>
</dbReference>
<dbReference type="GeneID" id="12925"/>
<dbReference type="KEGG" id="mmu:12925"/>
<dbReference type="UCSC" id="uc007pfz.1">
    <property type="organism name" value="mouse"/>
</dbReference>
<dbReference type="AGR" id="MGI:88501"/>
<dbReference type="CTD" id="1396"/>
<dbReference type="MGI" id="MGI:88501">
    <property type="gene designation" value="Crip1"/>
</dbReference>
<dbReference type="VEuPathDB" id="HostDB:ENSMUSG00000006360"/>
<dbReference type="eggNOG" id="KOG1700">
    <property type="taxonomic scope" value="Eukaryota"/>
</dbReference>
<dbReference type="GeneTree" id="ENSGT00940000162342"/>
<dbReference type="HOGENOM" id="CLU_026811_4_1_1"/>
<dbReference type="InParanoid" id="P63254"/>
<dbReference type="OrthoDB" id="20445at9989"/>
<dbReference type="PhylomeDB" id="P63254"/>
<dbReference type="BioGRID-ORCS" id="12925">
    <property type="hits" value="2 hits in 75 CRISPR screens"/>
</dbReference>
<dbReference type="ChiTaRS" id="Crip1">
    <property type="organism name" value="mouse"/>
</dbReference>
<dbReference type="PRO" id="PR:P63254"/>
<dbReference type="Proteomes" id="UP000000589">
    <property type="component" value="Chromosome 12"/>
</dbReference>
<dbReference type="RNAct" id="P63254">
    <property type="molecule type" value="protein"/>
</dbReference>
<dbReference type="Bgee" id="ENSMUSG00000006360">
    <property type="expression patterns" value="Expressed in small intestine Peyer's patch and 243 other cell types or tissues"/>
</dbReference>
<dbReference type="ExpressionAtlas" id="P63254">
    <property type="expression patterns" value="baseline and differential"/>
</dbReference>
<dbReference type="GO" id="GO:0005737">
    <property type="term" value="C:cytoplasm"/>
    <property type="evidence" value="ECO:0000250"/>
    <property type="project" value="UniProtKB"/>
</dbReference>
<dbReference type="GO" id="GO:0042277">
    <property type="term" value="F:peptide binding"/>
    <property type="evidence" value="ECO:0000250"/>
    <property type="project" value="UniProtKB"/>
</dbReference>
<dbReference type="GO" id="GO:0008270">
    <property type="term" value="F:zinc ion binding"/>
    <property type="evidence" value="ECO:0000250"/>
    <property type="project" value="UniProtKB"/>
</dbReference>
<dbReference type="GO" id="GO:0071236">
    <property type="term" value="P:cellular response to antibiotic"/>
    <property type="evidence" value="ECO:0000250"/>
    <property type="project" value="UniProtKB"/>
</dbReference>
<dbReference type="GO" id="GO:0071493">
    <property type="term" value="P:cellular response to UV-B"/>
    <property type="evidence" value="ECO:0000250"/>
    <property type="project" value="UniProtKB"/>
</dbReference>
<dbReference type="GO" id="GO:0008630">
    <property type="term" value="P:intrinsic apoptotic signaling pathway in response to DNA damage"/>
    <property type="evidence" value="ECO:0000250"/>
    <property type="project" value="UniProtKB"/>
</dbReference>
<dbReference type="GO" id="GO:0010043">
    <property type="term" value="P:response to zinc ion"/>
    <property type="evidence" value="ECO:0000250"/>
    <property type="project" value="UniProtKB"/>
</dbReference>
<dbReference type="CDD" id="cd09478">
    <property type="entry name" value="LIM_CRIP"/>
    <property type="match status" value="1"/>
</dbReference>
<dbReference type="FunFam" id="2.10.110.10:FF:000054">
    <property type="entry name" value="Cysteine-rich protein 1"/>
    <property type="match status" value="1"/>
</dbReference>
<dbReference type="Gene3D" id="2.10.110.10">
    <property type="entry name" value="Cysteine Rich Protein"/>
    <property type="match status" value="1"/>
</dbReference>
<dbReference type="InterPro" id="IPR001781">
    <property type="entry name" value="Znf_LIM"/>
</dbReference>
<dbReference type="PANTHER" id="PTHR46074:SF3">
    <property type="entry name" value="CYSTEINE-RICH PROTEIN 1"/>
    <property type="match status" value="1"/>
</dbReference>
<dbReference type="PANTHER" id="PTHR46074">
    <property type="entry name" value="CYSTEINE-RICH PROTEIN CRIP FAMILY MEMBER"/>
    <property type="match status" value="1"/>
</dbReference>
<dbReference type="Pfam" id="PF00412">
    <property type="entry name" value="LIM"/>
    <property type="match status" value="1"/>
</dbReference>
<dbReference type="SMART" id="SM00132">
    <property type="entry name" value="LIM"/>
    <property type="match status" value="1"/>
</dbReference>
<dbReference type="SUPFAM" id="SSF57716">
    <property type="entry name" value="Glucocorticoid receptor-like (DNA-binding domain)"/>
    <property type="match status" value="2"/>
</dbReference>
<dbReference type="PROSITE" id="PS00478">
    <property type="entry name" value="LIM_DOMAIN_1"/>
    <property type="match status" value="1"/>
</dbReference>
<dbReference type="PROSITE" id="PS50023">
    <property type="entry name" value="LIM_DOMAIN_2"/>
    <property type="match status" value="1"/>
</dbReference>
<gene>
    <name type="primary">Crip1</name>
    <name type="synonym">Crip</name>
</gene>
<comment type="function">
    <text>Seems to have a role in zinc absorption and may function as an intracellular zinc transport protein.</text>
</comment>
<evidence type="ECO:0000250" key="1">
    <source>
        <dbReference type="UniProtKB" id="P50238"/>
    </source>
</evidence>
<evidence type="ECO:0000255" key="2">
    <source>
        <dbReference type="PROSITE-ProRule" id="PRU00125"/>
    </source>
</evidence>
<evidence type="ECO:0007744" key="3">
    <source>
    </source>
</evidence>
<evidence type="ECO:0007744" key="4">
    <source>
    </source>
</evidence>
<accession>P63254</accession>
<accession>P04006</accession>
<accession>Q3THF0</accession>
<proteinExistence type="evidence at protein level"/>
<feature type="chain" id="PRO_0000075708" description="Cysteine-rich protein 1">
    <location>
        <begin position="1"/>
        <end position="77"/>
    </location>
</feature>
<feature type="domain" description="LIM zinc-binding" evidence="2">
    <location>
        <begin position="2"/>
        <end position="63"/>
    </location>
</feature>
<feature type="modified residue" description="N6-acetyllysine" evidence="1">
    <location>
        <position position="9"/>
    </location>
</feature>
<feature type="modified residue" description="N6-acetyllysine" evidence="3">
    <location>
        <position position="22"/>
    </location>
</feature>
<feature type="modified residue" description="Omega-N-methylarginine" evidence="4">
    <location>
        <position position="68"/>
    </location>
</feature>
<reference key="1">
    <citation type="journal article" date="1986" name="Proc. Natl. Acad. Sci. U.S.A.">
        <title>Developmental regulation of a gene that encodes a cysteine-rich intestinal protein and maps near the murine immunoglobulin heavy chain locus.</title>
        <authorList>
            <person name="Birkenmeier E.H."/>
            <person name="Gordon J.I."/>
        </authorList>
    </citation>
    <scope>NUCLEOTIDE SEQUENCE [MRNA]</scope>
</reference>
<reference key="2">
    <citation type="journal article" date="2002" name="Proc. Natl. Acad. Sci. U.S.A.">
        <title>The origin of a developmentally regulated Igh replicon is located near the border of regulatory domains for Igh replication and expression.</title>
        <authorList>
            <person name="Zhou J."/>
            <person name="Ashouian N."/>
            <person name="Delepine M."/>
            <person name="Matsuda F."/>
            <person name="Chevillard C."/>
            <person name="Riblet R."/>
            <person name="Schildkraut C.L."/>
            <person name="Birshtein B.K."/>
        </authorList>
    </citation>
    <scope>NUCLEOTIDE SEQUENCE [GENOMIC DNA]</scope>
    <source>
        <strain>129S1/Sv</strain>
    </source>
</reference>
<reference key="3">
    <citation type="journal article" date="2005" name="Science">
        <title>The transcriptional landscape of the mammalian genome.</title>
        <authorList>
            <person name="Carninci P."/>
            <person name="Kasukawa T."/>
            <person name="Katayama S."/>
            <person name="Gough J."/>
            <person name="Frith M.C."/>
            <person name="Maeda N."/>
            <person name="Oyama R."/>
            <person name="Ravasi T."/>
            <person name="Lenhard B."/>
            <person name="Wells C."/>
            <person name="Kodzius R."/>
            <person name="Shimokawa K."/>
            <person name="Bajic V.B."/>
            <person name="Brenner S.E."/>
            <person name="Batalov S."/>
            <person name="Forrest A.R."/>
            <person name="Zavolan M."/>
            <person name="Davis M.J."/>
            <person name="Wilming L.G."/>
            <person name="Aidinis V."/>
            <person name="Allen J.E."/>
            <person name="Ambesi-Impiombato A."/>
            <person name="Apweiler R."/>
            <person name="Aturaliya R.N."/>
            <person name="Bailey T.L."/>
            <person name="Bansal M."/>
            <person name="Baxter L."/>
            <person name="Beisel K.W."/>
            <person name="Bersano T."/>
            <person name="Bono H."/>
            <person name="Chalk A.M."/>
            <person name="Chiu K.P."/>
            <person name="Choudhary V."/>
            <person name="Christoffels A."/>
            <person name="Clutterbuck D.R."/>
            <person name="Crowe M.L."/>
            <person name="Dalla E."/>
            <person name="Dalrymple B.P."/>
            <person name="de Bono B."/>
            <person name="Della Gatta G."/>
            <person name="di Bernardo D."/>
            <person name="Down T."/>
            <person name="Engstrom P."/>
            <person name="Fagiolini M."/>
            <person name="Faulkner G."/>
            <person name="Fletcher C.F."/>
            <person name="Fukushima T."/>
            <person name="Furuno M."/>
            <person name="Futaki S."/>
            <person name="Gariboldi M."/>
            <person name="Georgii-Hemming P."/>
            <person name="Gingeras T.R."/>
            <person name="Gojobori T."/>
            <person name="Green R.E."/>
            <person name="Gustincich S."/>
            <person name="Harbers M."/>
            <person name="Hayashi Y."/>
            <person name="Hensch T.K."/>
            <person name="Hirokawa N."/>
            <person name="Hill D."/>
            <person name="Huminiecki L."/>
            <person name="Iacono M."/>
            <person name="Ikeo K."/>
            <person name="Iwama A."/>
            <person name="Ishikawa T."/>
            <person name="Jakt M."/>
            <person name="Kanapin A."/>
            <person name="Katoh M."/>
            <person name="Kawasawa Y."/>
            <person name="Kelso J."/>
            <person name="Kitamura H."/>
            <person name="Kitano H."/>
            <person name="Kollias G."/>
            <person name="Krishnan S.P."/>
            <person name="Kruger A."/>
            <person name="Kummerfeld S.K."/>
            <person name="Kurochkin I.V."/>
            <person name="Lareau L.F."/>
            <person name="Lazarevic D."/>
            <person name="Lipovich L."/>
            <person name="Liu J."/>
            <person name="Liuni S."/>
            <person name="McWilliam S."/>
            <person name="Madan Babu M."/>
            <person name="Madera M."/>
            <person name="Marchionni L."/>
            <person name="Matsuda H."/>
            <person name="Matsuzawa S."/>
            <person name="Miki H."/>
            <person name="Mignone F."/>
            <person name="Miyake S."/>
            <person name="Morris K."/>
            <person name="Mottagui-Tabar S."/>
            <person name="Mulder N."/>
            <person name="Nakano N."/>
            <person name="Nakauchi H."/>
            <person name="Ng P."/>
            <person name="Nilsson R."/>
            <person name="Nishiguchi S."/>
            <person name="Nishikawa S."/>
            <person name="Nori F."/>
            <person name="Ohara O."/>
            <person name="Okazaki Y."/>
            <person name="Orlando V."/>
            <person name="Pang K.C."/>
            <person name="Pavan W.J."/>
            <person name="Pavesi G."/>
            <person name="Pesole G."/>
            <person name="Petrovsky N."/>
            <person name="Piazza S."/>
            <person name="Reed J."/>
            <person name="Reid J.F."/>
            <person name="Ring B.Z."/>
            <person name="Ringwald M."/>
            <person name="Rost B."/>
            <person name="Ruan Y."/>
            <person name="Salzberg S.L."/>
            <person name="Sandelin A."/>
            <person name="Schneider C."/>
            <person name="Schoenbach C."/>
            <person name="Sekiguchi K."/>
            <person name="Semple C.A."/>
            <person name="Seno S."/>
            <person name="Sessa L."/>
            <person name="Sheng Y."/>
            <person name="Shibata Y."/>
            <person name="Shimada H."/>
            <person name="Shimada K."/>
            <person name="Silva D."/>
            <person name="Sinclair B."/>
            <person name="Sperling S."/>
            <person name="Stupka E."/>
            <person name="Sugiura K."/>
            <person name="Sultana R."/>
            <person name="Takenaka Y."/>
            <person name="Taki K."/>
            <person name="Tammoja K."/>
            <person name="Tan S.L."/>
            <person name="Tang S."/>
            <person name="Taylor M.S."/>
            <person name="Tegner J."/>
            <person name="Teichmann S.A."/>
            <person name="Ueda H.R."/>
            <person name="van Nimwegen E."/>
            <person name="Verardo R."/>
            <person name="Wei C.L."/>
            <person name="Yagi K."/>
            <person name="Yamanishi H."/>
            <person name="Zabarovsky E."/>
            <person name="Zhu S."/>
            <person name="Zimmer A."/>
            <person name="Hide W."/>
            <person name="Bult C."/>
            <person name="Grimmond S.M."/>
            <person name="Teasdale R.D."/>
            <person name="Liu E.T."/>
            <person name="Brusic V."/>
            <person name="Quackenbush J."/>
            <person name="Wahlestedt C."/>
            <person name="Mattick J.S."/>
            <person name="Hume D.A."/>
            <person name="Kai C."/>
            <person name="Sasaki D."/>
            <person name="Tomaru Y."/>
            <person name="Fukuda S."/>
            <person name="Kanamori-Katayama M."/>
            <person name="Suzuki M."/>
            <person name="Aoki J."/>
            <person name="Arakawa T."/>
            <person name="Iida J."/>
            <person name="Imamura K."/>
            <person name="Itoh M."/>
            <person name="Kato T."/>
            <person name="Kawaji H."/>
            <person name="Kawagashira N."/>
            <person name="Kawashima T."/>
            <person name="Kojima M."/>
            <person name="Kondo S."/>
            <person name="Konno H."/>
            <person name="Nakano K."/>
            <person name="Ninomiya N."/>
            <person name="Nishio T."/>
            <person name="Okada M."/>
            <person name="Plessy C."/>
            <person name="Shibata K."/>
            <person name="Shiraki T."/>
            <person name="Suzuki S."/>
            <person name="Tagami M."/>
            <person name="Waki K."/>
            <person name="Watahiki A."/>
            <person name="Okamura-Oho Y."/>
            <person name="Suzuki H."/>
            <person name="Kawai J."/>
            <person name="Hayashizaki Y."/>
        </authorList>
    </citation>
    <scope>NUCLEOTIDE SEQUENCE [LARGE SCALE MRNA]</scope>
    <source>
        <strain>C57BL/6J</strain>
        <strain>DBA/2J</strain>
        <tissue>Small intestine</tissue>
        <tissue>Spleen</tissue>
    </source>
</reference>
<reference key="4">
    <citation type="journal article" date="2004" name="Genome Res.">
        <title>The status, quality, and expansion of the NIH full-length cDNA project: the Mammalian Gene Collection (MGC).</title>
        <authorList>
            <consortium name="The MGC Project Team"/>
        </authorList>
    </citation>
    <scope>NUCLEOTIDE SEQUENCE [LARGE SCALE MRNA]</scope>
    <source>
        <strain>FVB/N</strain>
        <tissue>Colon</tissue>
    </source>
</reference>
<reference key="5">
    <citation type="journal article" date="2010" name="Cell">
        <title>A tissue-specific atlas of mouse protein phosphorylation and expression.</title>
        <authorList>
            <person name="Huttlin E.L."/>
            <person name="Jedrychowski M.P."/>
            <person name="Elias J.E."/>
            <person name="Goswami T."/>
            <person name="Rad R."/>
            <person name="Beausoleil S.A."/>
            <person name="Villen J."/>
            <person name="Haas W."/>
            <person name="Sowa M.E."/>
            <person name="Gygi S.P."/>
        </authorList>
    </citation>
    <scope>IDENTIFICATION BY MASS SPECTROMETRY [LARGE SCALE ANALYSIS]</scope>
    <source>
        <tissue>Heart</tissue>
        <tissue>Kidney</tissue>
        <tissue>Lung</tissue>
        <tissue>Spleen</tissue>
    </source>
</reference>
<reference key="6">
    <citation type="journal article" date="2013" name="Mol. Cell">
        <title>SIRT5-mediated lysine desuccinylation impacts diverse metabolic pathways.</title>
        <authorList>
            <person name="Park J."/>
            <person name="Chen Y."/>
            <person name="Tishkoff D.X."/>
            <person name="Peng C."/>
            <person name="Tan M."/>
            <person name="Dai L."/>
            <person name="Xie Z."/>
            <person name="Zhang Y."/>
            <person name="Zwaans B.M."/>
            <person name="Skinner M.E."/>
            <person name="Lombard D.B."/>
            <person name="Zhao Y."/>
        </authorList>
    </citation>
    <scope>ACETYLATION [LARGE SCALE ANALYSIS] AT LYS-22</scope>
    <scope>IDENTIFICATION BY MASS SPECTROMETRY [LARGE SCALE ANALYSIS]</scope>
    <source>
        <tissue>Embryonic fibroblast</tissue>
    </source>
</reference>
<reference key="7">
    <citation type="journal article" date="2014" name="Mol. Cell. Proteomics">
        <title>Immunoaffinity enrichment and mass spectrometry analysis of protein methylation.</title>
        <authorList>
            <person name="Guo A."/>
            <person name="Gu H."/>
            <person name="Zhou J."/>
            <person name="Mulhern D."/>
            <person name="Wang Y."/>
            <person name="Lee K.A."/>
            <person name="Yang V."/>
            <person name="Aguiar M."/>
            <person name="Kornhauser J."/>
            <person name="Jia X."/>
            <person name="Ren J."/>
            <person name="Beausoleil S.A."/>
            <person name="Silva J.C."/>
            <person name="Vemulapalli V."/>
            <person name="Bedford M.T."/>
            <person name="Comb M.J."/>
        </authorList>
    </citation>
    <scope>METHYLATION [LARGE SCALE ANALYSIS] AT ARG-68</scope>
    <scope>IDENTIFICATION BY MASS SPECTROMETRY [LARGE SCALE ANALYSIS]</scope>
    <source>
        <tissue>Brain</tissue>
        <tissue>Embryo</tissue>
    </source>
</reference>
<name>CRIP1_MOUSE</name>